<proteinExistence type="inferred from homology"/>
<comment type="function">
    <text evidence="1">Exerts its effect at some terminal stage of cytochrome c oxidase synthesis, probably by being involved in the insertion of the copper B into subunit I.</text>
</comment>
<comment type="subcellular location">
    <subcellularLocation>
        <location evidence="1">Cell inner membrane</location>
        <topology evidence="1">Single-pass type II membrane protein</topology>
        <orientation evidence="1">Periplasmic side</orientation>
    </subcellularLocation>
</comment>
<comment type="similarity">
    <text evidence="1">Belongs to the COX11/CtaG family.</text>
</comment>
<protein>
    <recommendedName>
        <fullName evidence="1">Cytochrome c oxidase assembly protein CtaG</fullName>
    </recommendedName>
</protein>
<feature type="chain" id="PRO_0000246139" description="Cytochrome c oxidase assembly protein CtaG">
    <location>
        <begin position="1"/>
        <end position="202"/>
    </location>
</feature>
<feature type="topological domain" description="Cytoplasmic" evidence="1">
    <location>
        <begin position="1"/>
        <end position="14"/>
    </location>
</feature>
<feature type="transmembrane region" description="Helical; Signal-anchor for type II membrane protein" evidence="1">
    <location>
        <begin position="15"/>
        <end position="37"/>
    </location>
</feature>
<feature type="topological domain" description="Periplasmic" evidence="1">
    <location>
        <begin position="38"/>
        <end position="202"/>
    </location>
</feature>
<gene>
    <name evidence="1" type="primary">ctaG</name>
    <name type="ordered locus">RL1025</name>
</gene>
<sequence>MSENAGTPKKQGRNNGAVVMMCLSFVFGMGAMSYAAVPLYRIFCQVTGYNGTTQRVDQVSSVVLDRTMRVTFDANVAPGLQWDFKPVEREVNPKIGETIQVNFTAENRSNETQRGQAVFNVTPGEAGVYFNKVQCFCFTETDLKPGEKLDMPVVFYIDPEIVKAVESKNIHTVTLSYTFYPKEGPKPVASNEGGAEKIEKKL</sequence>
<accession>Q1MKI3</accession>
<organism>
    <name type="scientific">Rhizobium johnstonii (strain DSM 114642 / LMG 32736 / 3841)</name>
    <name type="common">Rhizobium leguminosarum bv. viciae</name>
    <dbReference type="NCBI Taxonomy" id="216596"/>
    <lineage>
        <taxon>Bacteria</taxon>
        <taxon>Pseudomonadati</taxon>
        <taxon>Pseudomonadota</taxon>
        <taxon>Alphaproteobacteria</taxon>
        <taxon>Hyphomicrobiales</taxon>
        <taxon>Rhizobiaceae</taxon>
        <taxon>Rhizobium/Agrobacterium group</taxon>
        <taxon>Rhizobium</taxon>
        <taxon>Rhizobium johnstonii</taxon>
    </lineage>
</organism>
<evidence type="ECO:0000255" key="1">
    <source>
        <dbReference type="HAMAP-Rule" id="MF_00155"/>
    </source>
</evidence>
<name>COXZ_RHIJ3</name>
<dbReference type="EMBL" id="AM236080">
    <property type="protein sequence ID" value="CAK06522.1"/>
    <property type="molecule type" value="Genomic_DNA"/>
</dbReference>
<dbReference type="RefSeq" id="WP_011650760.1">
    <property type="nucleotide sequence ID" value="NC_008380.1"/>
</dbReference>
<dbReference type="SMR" id="Q1MKI3"/>
<dbReference type="EnsemblBacteria" id="CAK06522">
    <property type="protein sequence ID" value="CAK06522"/>
    <property type="gene ID" value="RL1025"/>
</dbReference>
<dbReference type="KEGG" id="rle:RL1025"/>
<dbReference type="eggNOG" id="COG3175">
    <property type="taxonomic scope" value="Bacteria"/>
</dbReference>
<dbReference type="HOGENOM" id="CLU_045000_5_0_5"/>
<dbReference type="Proteomes" id="UP000006575">
    <property type="component" value="Chromosome"/>
</dbReference>
<dbReference type="GO" id="GO:0005886">
    <property type="term" value="C:plasma membrane"/>
    <property type="evidence" value="ECO:0007669"/>
    <property type="project" value="UniProtKB-SubCell"/>
</dbReference>
<dbReference type="GO" id="GO:0005507">
    <property type="term" value="F:copper ion binding"/>
    <property type="evidence" value="ECO:0007669"/>
    <property type="project" value="InterPro"/>
</dbReference>
<dbReference type="GO" id="GO:0008535">
    <property type="term" value="P:respiratory chain complex IV assembly"/>
    <property type="evidence" value="ECO:0007669"/>
    <property type="project" value="UniProtKB-UniRule"/>
</dbReference>
<dbReference type="FunFam" id="2.60.370.10:FF:000001">
    <property type="entry name" value="COX11 cytochrome c oxidase assembly homolog"/>
    <property type="match status" value="1"/>
</dbReference>
<dbReference type="Gene3D" id="2.60.370.10">
    <property type="entry name" value="Ctag/Cox11"/>
    <property type="match status" value="1"/>
</dbReference>
<dbReference type="HAMAP" id="MF_00155">
    <property type="entry name" value="CtaG"/>
    <property type="match status" value="1"/>
</dbReference>
<dbReference type="InterPro" id="IPR023471">
    <property type="entry name" value="CtaG/Cox11_dom_sf"/>
</dbReference>
<dbReference type="InterPro" id="IPR007533">
    <property type="entry name" value="Cyt_c_oxidase_assmbl_CtaG"/>
</dbReference>
<dbReference type="NCBIfam" id="NF003465">
    <property type="entry name" value="PRK05089.1"/>
    <property type="match status" value="1"/>
</dbReference>
<dbReference type="PANTHER" id="PTHR21320:SF3">
    <property type="entry name" value="CYTOCHROME C OXIDASE ASSEMBLY PROTEIN COX11, MITOCHONDRIAL-RELATED"/>
    <property type="match status" value="1"/>
</dbReference>
<dbReference type="PANTHER" id="PTHR21320">
    <property type="entry name" value="CYTOCHROME C OXIDASE ASSEMBLY PROTEIN COX11-RELATED"/>
    <property type="match status" value="1"/>
</dbReference>
<dbReference type="Pfam" id="PF04442">
    <property type="entry name" value="CtaG_Cox11"/>
    <property type="match status" value="1"/>
</dbReference>
<dbReference type="PIRSF" id="PIRSF005413">
    <property type="entry name" value="COX11"/>
    <property type="match status" value="1"/>
</dbReference>
<dbReference type="SUPFAM" id="SSF110111">
    <property type="entry name" value="Ctag/Cox11"/>
    <property type="match status" value="1"/>
</dbReference>
<reference key="1">
    <citation type="journal article" date="2006" name="Genome Biol.">
        <title>The genome of Rhizobium leguminosarum has recognizable core and accessory components.</title>
        <authorList>
            <person name="Young J.P.W."/>
            <person name="Crossman L.C."/>
            <person name="Johnston A.W.B."/>
            <person name="Thomson N.R."/>
            <person name="Ghazoui Z.F."/>
            <person name="Hull K.H."/>
            <person name="Wexler M."/>
            <person name="Curson A.R.J."/>
            <person name="Todd J.D."/>
            <person name="Poole P.S."/>
            <person name="Mauchline T.H."/>
            <person name="East A.K."/>
            <person name="Quail M.A."/>
            <person name="Churcher C."/>
            <person name="Arrowsmith C."/>
            <person name="Cherevach I."/>
            <person name="Chillingworth T."/>
            <person name="Clarke K."/>
            <person name="Cronin A."/>
            <person name="Davis P."/>
            <person name="Fraser A."/>
            <person name="Hance Z."/>
            <person name="Hauser H."/>
            <person name="Jagels K."/>
            <person name="Moule S."/>
            <person name="Mungall K."/>
            <person name="Norbertczak H."/>
            <person name="Rabbinowitsch E."/>
            <person name="Sanders M."/>
            <person name="Simmonds M."/>
            <person name="Whitehead S."/>
            <person name="Parkhill J."/>
        </authorList>
    </citation>
    <scope>NUCLEOTIDE SEQUENCE [LARGE SCALE GENOMIC DNA]</scope>
    <source>
        <strain>DSM 114642 / LMG 32736 / 3841</strain>
    </source>
</reference>
<keyword id="KW-0997">Cell inner membrane</keyword>
<keyword id="KW-1003">Cell membrane</keyword>
<keyword id="KW-0186">Copper</keyword>
<keyword id="KW-0472">Membrane</keyword>
<keyword id="KW-0735">Signal-anchor</keyword>
<keyword id="KW-0812">Transmembrane</keyword>
<keyword id="KW-1133">Transmembrane helix</keyword>